<accession>P38598</accession>
<reference key="1">
    <citation type="journal article" date="1993" name="J. Mol. Evol.">
        <title>The nucleotide sequence of the mitochondrial DNA molecule of the grey seal, Halichoerus grypus, and a comparison with mitochondrial sequences of other true seals.</title>
        <authorList>
            <person name="Arnason U."/>
            <person name="Gullberg A."/>
            <person name="Johnsson E."/>
            <person name="Ledje C."/>
        </authorList>
    </citation>
    <scope>NUCLEOTIDE SEQUENCE [GENOMIC DNA]</scope>
</reference>
<dbReference type="EC" id="7.1.1.2" evidence="1"/>
<dbReference type="EMBL" id="X72004">
    <property type="protein sequence ID" value="CAA50877.1"/>
    <property type="molecule type" value="Genomic_DNA"/>
</dbReference>
<dbReference type="PIR" id="S41835">
    <property type="entry name" value="S41835"/>
</dbReference>
<dbReference type="RefSeq" id="NP_007069.1">
    <property type="nucleotide sequence ID" value="NC_001602.1"/>
</dbReference>
<dbReference type="SMR" id="P38598"/>
<dbReference type="GeneID" id="807753"/>
<dbReference type="CTD" id="4535"/>
<dbReference type="GO" id="GO:0005743">
    <property type="term" value="C:mitochondrial inner membrane"/>
    <property type="evidence" value="ECO:0000250"/>
    <property type="project" value="UniProtKB"/>
</dbReference>
<dbReference type="GO" id="GO:0008137">
    <property type="term" value="F:NADH dehydrogenase (ubiquinone) activity"/>
    <property type="evidence" value="ECO:0000250"/>
    <property type="project" value="UniProtKB"/>
</dbReference>
<dbReference type="GO" id="GO:0006120">
    <property type="term" value="P:mitochondrial electron transport, NADH to ubiquinone"/>
    <property type="evidence" value="ECO:0000250"/>
    <property type="project" value="UniProtKB"/>
</dbReference>
<dbReference type="GO" id="GO:0032981">
    <property type="term" value="P:mitochondrial respiratory chain complex I assembly"/>
    <property type="evidence" value="ECO:0000250"/>
    <property type="project" value="UniProtKB"/>
</dbReference>
<dbReference type="HAMAP" id="MF_01350">
    <property type="entry name" value="NDH1_NuoH"/>
    <property type="match status" value="1"/>
</dbReference>
<dbReference type="InterPro" id="IPR001694">
    <property type="entry name" value="NADH_UbQ_OxRdtase_su1/FPO"/>
</dbReference>
<dbReference type="InterPro" id="IPR018086">
    <property type="entry name" value="NADH_UbQ_OxRdtase_su1_CS"/>
</dbReference>
<dbReference type="PANTHER" id="PTHR11432">
    <property type="entry name" value="NADH DEHYDROGENASE SUBUNIT 1"/>
    <property type="match status" value="1"/>
</dbReference>
<dbReference type="PANTHER" id="PTHR11432:SF3">
    <property type="entry name" value="NADH-UBIQUINONE OXIDOREDUCTASE CHAIN 1"/>
    <property type="match status" value="1"/>
</dbReference>
<dbReference type="Pfam" id="PF00146">
    <property type="entry name" value="NADHdh"/>
    <property type="match status" value="1"/>
</dbReference>
<dbReference type="PROSITE" id="PS00667">
    <property type="entry name" value="COMPLEX1_ND1_1"/>
    <property type="match status" value="1"/>
</dbReference>
<dbReference type="PROSITE" id="PS00668">
    <property type="entry name" value="COMPLEX1_ND1_2"/>
    <property type="match status" value="1"/>
</dbReference>
<organism>
    <name type="scientific">Halichoerus grypus</name>
    <name type="common">Gray seal</name>
    <name type="synonym">Phoca grypus</name>
    <dbReference type="NCBI Taxonomy" id="9711"/>
    <lineage>
        <taxon>Eukaryota</taxon>
        <taxon>Metazoa</taxon>
        <taxon>Chordata</taxon>
        <taxon>Craniata</taxon>
        <taxon>Vertebrata</taxon>
        <taxon>Euteleostomi</taxon>
        <taxon>Mammalia</taxon>
        <taxon>Eutheria</taxon>
        <taxon>Laurasiatheria</taxon>
        <taxon>Carnivora</taxon>
        <taxon>Caniformia</taxon>
        <taxon>Pinnipedia</taxon>
        <taxon>Phocidae</taxon>
        <taxon>Phocinae</taxon>
        <taxon>Halichoerus</taxon>
    </lineage>
</organism>
<evidence type="ECO:0000250" key="1">
    <source>
        <dbReference type="UniProtKB" id="P03886"/>
    </source>
</evidence>
<evidence type="ECO:0000250" key="2">
    <source>
        <dbReference type="UniProtKB" id="P03887"/>
    </source>
</evidence>
<evidence type="ECO:0000255" key="3"/>
<evidence type="ECO:0000305" key="4"/>
<comment type="function">
    <text evidence="1">Core subunit of the mitochondrial membrane respiratory chain NADH dehydrogenase (Complex I) which catalyzes electron transfer from NADH through the respiratory chain, using ubiquinone as an electron acceptor. Essential for the catalytic activity and assembly of complex I.</text>
</comment>
<comment type="catalytic activity">
    <reaction evidence="1">
        <text>a ubiquinone + NADH + 5 H(+)(in) = a ubiquinol + NAD(+) + 4 H(+)(out)</text>
        <dbReference type="Rhea" id="RHEA:29091"/>
        <dbReference type="Rhea" id="RHEA-COMP:9565"/>
        <dbReference type="Rhea" id="RHEA-COMP:9566"/>
        <dbReference type="ChEBI" id="CHEBI:15378"/>
        <dbReference type="ChEBI" id="CHEBI:16389"/>
        <dbReference type="ChEBI" id="CHEBI:17976"/>
        <dbReference type="ChEBI" id="CHEBI:57540"/>
        <dbReference type="ChEBI" id="CHEBI:57945"/>
        <dbReference type="EC" id="7.1.1.2"/>
    </reaction>
</comment>
<comment type="subunit">
    <text evidence="2">Core subunit of respiratory chain NADH dehydrogenase (Complex I) which is composed of 45 different subunits.</text>
</comment>
<comment type="subcellular location">
    <subcellularLocation>
        <location evidence="2">Mitochondrion inner membrane</location>
        <topology evidence="3">Multi-pass membrane protein</topology>
    </subcellularLocation>
</comment>
<comment type="similarity">
    <text evidence="4">Belongs to the complex I subunit 1 family.</text>
</comment>
<protein>
    <recommendedName>
        <fullName>NADH-ubiquinone oxidoreductase chain 1</fullName>
        <ecNumber evidence="1">7.1.1.2</ecNumber>
    </recommendedName>
    <alternativeName>
        <fullName>NADH dehydrogenase subunit 1</fullName>
    </alternativeName>
</protein>
<geneLocation type="mitochondrion"/>
<feature type="chain" id="PRO_0000117409" description="NADH-ubiquinone oxidoreductase chain 1">
    <location>
        <begin position="1"/>
        <end position="318"/>
    </location>
</feature>
<feature type="transmembrane region" description="Helical" evidence="3">
    <location>
        <begin position="2"/>
        <end position="22"/>
    </location>
</feature>
<feature type="transmembrane region" description="Helical" evidence="3">
    <location>
        <begin position="70"/>
        <end position="90"/>
    </location>
</feature>
<feature type="transmembrane region" description="Helical" evidence="3">
    <location>
        <begin position="100"/>
        <end position="120"/>
    </location>
</feature>
<feature type="transmembrane region" description="Helical" evidence="3">
    <location>
        <begin position="147"/>
        <end position="167"/>
    </location>
</feature>
<feature type="transmembrane region" description="Helical" evidence="3">
    <location>
        <begin position="171"/>
        <end position="191"/>
    </location>
</feature>
<feature type="transmembrane region" description="Helical" evidence="3">
    <location>
        <begin position="223"/>
        <end position="243"/>
    </location>
</feature>
<feature type="transmembrane region" description="Helical" evidence="3">
    <location>
        <begin position="253"/>
        <end position="273"/>
    </location>
</feature>
<feature type="transmembrane region" description="Helical" evidence="3">
    <location>
        <begin position="294"/>
        <end position="314"/>
    </location>
</feature>
<sequence>MFMINIISLIIPILLAVAFLTLVERKVLGYMQLRKGPNIVGPYGLLQPIADAVKLFTKEPLRPLTSSTTMFIMAPILALTLALTMWVPLPMPYPLINMNLGVLFMLAMSSLAVYSILWSGWASNSKYALIGALRAVAQTISYEVTLAIILLSVLLMNGSFTLSTLIITQEHLWLIFPAWPLAMMWFISTLAETNRAPFDLTEGESELVSGFNVEYAAGPFAMFFLAEYANIIMMNIFTTLLFFGAFHNPYMPELYVVNFTVKTLALTILFLWIRASYPRFRYDQLMHLLWKNFLPLTLALCMWHVTLPIISASIPPQT</sequence>
<name>NU1M_HALGR</name>
<proteinExistence type="inferred from homology"/>
<keyword id="KW-0249">Electron transport</keyword>
<keyword id="KW-0472">Membrane</keyword>
<keyword id="KW-0496">Mitochondrion</keyword>
<keyword id="KW-0999">Mitochondrion inner membrane</keyword>
<keyword id="KW-0520">NAD</keyword>
<keyword id="KW-0679">Respiratory chain</keyword>
<keyword id="KW-1278">Translocase</keyword>
<keyword id="KW-0812">Transmembrane</keyword>
<keyword id="KW-1133">Transmembrane helix</keyword>
<keyword id="KW-0813">Transport</keyword>
<keyword id="KW-0830">Ubiquinone</keyword>
<gene>
    <name type="primary">MT-ND1</name>
    <name type="synonym">MTND1</name>
    <name type="synonym">NADH1</name>
    <name type="synonym">ND1</name>
</gene>